<feature type="signal peptide" evidence="2">
    <location>
        <begin position="1"/>
        <end position="40"/>
    </location>
</feature>
<feature type="chain" id="PRO_0000000222" description="Diacylglycerol acyltransferase/mycolyltransferase Ag85B">
    <location>
        <begin position="41"/>
        <end position="325"/>
    </location>
</feature>
<feature type="region of interest" description="Fibronectin-binding" evidence="1">
    <location>
        <begin position="98"/>
        <end position="108"/>
    </location>
</feature>
<feature type="active site" description="Nucleophile" evidence="8">
    <location>
        <position position="166"/>
    </location>
</feature>
<feature type="active site" evidence="8">
    <location>
        <position position="270"/>
    </location>
</feature>
<feature type="active site" evidence="8">
    <location>
        <position position="302"/>
    </location>
</feature>
<feature type="binding site">
    <location>
        <begin position="82"/>
        <end position="83"/>
    </location>
    <ligand>
        <name>substrate</name>
    </ligand>
</feature>
<feature type="binding site" evidence="3">
    <location>
        <position position="166"/>
    </location>
    <ligand>
        <name>substrate</name>
    </ligand>
</feature>
<feature type="binding site" evidence="3">
    <location>
        <position position="194"/>
    </location>
    <ligand>
        <name>substrate</name>
    </ligand>
</feature>
<feature type="binding site">
    <location>
        <begin position="272"/>
        <end position="275"/>
    </location>
    <ligand>
        <name>substrate</name>
    </ligand>
</feature>
<feature type="binding site" evidence="3">
    <location>
        <position position="279"/>
    </location>
    <ligand>
        <name>substrate</name>
    </ligand>
</feature>
<feature type="binding site">
    <location>
        <begin position="302"/>
        <end position="304"/>
    </location>
    <ligand>
        <name>substrate</name>
    </ligand>
</feature>
<feature type="disulfide bond" evidence="3">
    <location>
        <begin position="127"/>
        <end position="132"/>
    </location>
</feature>
<feature type="strand" evidence="9">
    <location>
        <begin position="48"/>
        <end position="55"/>
    </location>
</feature>
<feature type="turn" evidence="9">
    <location>
        <begin position="56"/>
        <end position="59"/>
    </location>
</feature>
<feature type="strand" evidence="9">
    <location>
        <begin position="60"/>
        <end position="67"/>
    </location>
</feature>
<feature type="strand" evidence="9">
    <location>
        <begin position="75"/>
        <end position="79"/>
    </location>
</feature>
<feature type="strand" evidence="9">
    <location>
        <begin position="86"/>
        <end position="88"/>
    </location>
</feature>
<feature type="helix" evidence="9">
    <location>
        <begin position="90"/>
        <end position="94"/>
    </location>
</feature>
<feature type="helix" evidence="9">
    <location>
        <begin position="97"/>
        <end position="101"/>
    </location>
</feature>
<feature type="strand" evidence="9">
    <location>
        <begin position="107"/>
        <end position="111"/>
    </location>
</feature>
<feature type="strand" evidence="9">
    <location>
        <begin position="126"/>
        <end position="128"/>
    </location>
</feature>
<feature type="strand" evidence="9">
    <location>
        <begin position="131"/>
        <end position="133"/>
    </location>
</feature>
<feature type="helix" evidence="9">
    <location>
        <begin position="137"/>
        <end position="142"/>
    </location>
</feature>
<feature type="helix" evidence="9">
    <location>
        <begin position="144"/>
        <end position="153"/>
    </location>
</feature>
<feature type="strand" evidence="9">
    <location>
        <begin position="157"/>
        <end position="165"/>
    </location>
</feature>
<feature type="helix" evidence="9">
    <location>
        <begin position="167"/>
        <end position="178"/>
    </location>
</feature>
<feature type="turn" evidence="9">
    <location>
        <begin position="180"/>
        <end position="182"/>
    </location>
</feature>
<feature type="strand" evidence="9">
    <location>
        <begin position="183"/>
        <end position="190"/>
    </location>
</feature>
<feature type="helix" evidence="9">
    <location>
        <begin position="200"/>
        <end position="210"/>
    </location>
</feature>
<feature type="helix" evidence="9">
    <location>
        <begin position="216"/>
        <end position="220"/>
    </location>
</feature>
<feature type="helix" evidence="9">
    <location>
        <begin position="227"/>
        <end position="230"/>
    </location>
</feature>
<feature type="turn" evidence="9">
    <location>
        <begin position="233"/>
        <end position="236"/>
    </location>
</feature>
<feature type="helix" evidence="9">
    <location>
        <begin position="237"/>
        <end position="242"/>
    </location>
</feature>
<feature type="strand" evidence="9">
    <location>
        <begin position="246"/>
        <end position="250"/>
    </location>
</feature>
<feature type="helix" evidence="9">
    <location>
        <begin position="264"/>
        <end position="286"/>
    </location>
</feature>
<feature type="strand" evidence="9">
    <location>
        <begin position="291"/>
        <end position="295"/>
    </location>
</feature>
<feature type="helix" evidence="9">
    <location>
        <begin position="304"/>
        <end position="322"/>
    </location>
</feature>
<gene>
    <name type="primary">fbpB</name>
    <name type="ordered locus">Rv1886c</name>
    <name type="ORF">MTCY180.32</name>
</gene>
<proteinExistence type="evidence at protein level"/>
<dbReference type="EC" id="2.3.1.122"/>
<dbReference type="EC" id="2.3.1.20"/>
<dbReference type="EMBL" id="X62398">
    <property type="protein sequence ID" value="CAA44269.1"/>
    <property type="molecule type" value="Genomic_DNA"/>
</dbReference>
<dbReference type="EMBL" id="U38939">
    <property type="protein sequence ID" value="AAC44294.1"/>
    <property type="molecule type" value="Genomic_DNA"/>
</dbReference>
<dbReference type="EMBL" id="GQ150316">
    <property type="protein sequence ID" value="ADD50054.1"/>
    <property type="molecule type" value="Genomic_DNA"/>
</dbReference>
<dbReference type="EMBL" id="AL123456">
    <property type="protein sequence ID" value="CCP44652.1"/>
    <property type="molecule type" value="Genomic_DNA"/>
</dbReference>
<dbReference type="PIR" id="C70516">
    <property type="entry name" value="C70516"/>
</dbReference>
<dbReference type="RefSeq" id="NP_216402.1">
    <property type="nucleotide sequence ID" value="NC_000962.3"/>
</dbReference>
<dbReference type="RefSeq" id="WP_003409456.1">
    <property type="nucleotide sequence ID" value="NZ_NVQJ01000013.1"/>
</dbReference>
<dbReference type="PDB" id="1F0N">
    <property type="method" value="X-ray"/>
    <property type="resolution" value="1.80 A"/>
    <property type="chains" value="A=41-325"/>
</dbReference>
<dbReference type="PDB" id="1F0P">
    <property type="method" value="X-ray"/>
    <property type="resolution" value="1.90 A"/>
    <property type="chains" value="A=41-325"/>
</dbReference>
<dbReference type="PDB" id="5TRZ">
    <property type="method" value="X-ray"/>
    <property type="resolution" value="2.25 A"/>
    <property type="chains" value="P/Q=102-110"/>
</dbReference>
<dbReference type="PDB" id="5TS1">
    <property type="method" value="X-ray"/>
    <property type="resolution" value="2.30 A"/>
    <property type="chains" value="P/Q/R/S=101-109"/>
</dbReference>
<dbReference type="PDBsum" id="1F0N"/>
<dbReference type="PDBsum" id="1F0P"/>
<dbReference type="PDBsum" id="5TRZ"/>
<dbReference type="PDBsum" id="5TS1"/>
<dbReference type="SMR" id="P9WQP1"/>
<dbReference type="FunCoup" id="P9WQP1">
    <property type="interactions" value="13"/>
</dbReference>
<dbReference type="IntAct" id="P9WQP1">
    <property type="interactions" value="4"/>
</dbReference>
<dbReference type="STRING" id="83332.Rv1886c"/>
<dbReference type="ESTHER" id="myctu-a85b">
    <property type="family name" value="A85-Mycolyl-transferase"/>
</dbReference>
<dbReference type="MoonProt" id="P9WQP1"/>
<dbReference type="PaxDb" id="83332-Rv1886c"/>
<dbReference type="DNASU" id="885785"/>
<dbReference type="GeneID" id="45425859"/>
<dbReference type="GeneID" id="885785"/>
<dbReference type="KEGG" id="mtu:Rv1886c"/>
<dbReference type="KEGG" id="mtv:RVBD_1886c"/>
<dbReference type="TubercuList" id="Rv1886c"/>
<dbReference type="eggNOG" id="COG0627">
    <property type="taxonomic scope" value="Bacteria"/>
</dbReference>
<dbReference type="InParanoid" id="P9WQP1"/>
<dbReference type="OrthoDB" id="4366784at2"/>
<dbReference type="PhylomeDB" id="P9WQP1"/>
<dbReference type="BioCyc" id="MetaCyc:G185E-6081-MONOMER"/>
<dbReference type="EvolutionaryTrace" id="P9WQP1"/>
<dbReference type="Proteomes" id="UP000001584">
    <property type="component" value="Chromosome"/>
</dbReference>
<dbReference type="GO" id="GO:0005576">
    <property type="term" value="C:extracellular region"/>
    <property type="evidence" value="ECO:0000314"/>
    <property type="project" value="CAFA"/>
</dbReference>
<dbReference type="GO" id="GO:0009274">
    <property type="term" value="C:peptidoglycan-based cell wall"/>
    <property type="evidence" value="ECO:0000314"/>
    <property type="project" value="MTBBASE"/>
</dbReference>
<dbReference type="GO" id="GO:0005886">
    <property type="term" value="C:plasma membrane"/>
    <property type="evidence" value="ECO:0007005"/>
    <property type="project" value="MTBBASE"/>
</dbReference>
<dbReference type="GO" id="GO:0016747">
    <property type="term" value="F:acyltransferase activity, transferring groups other than amino-acyl groups"/>
    <property type="evidence" value="ECO:0000314"/>
    <property type="project" value="MTBBASE"/>
</dbReference>
<dbReference type="GO" id="GO:0004144">
    <property type="term" value="F:diacylglycerol O-acyltransferase activity"/>
    <property type="evidence" value="ECO:0007669"/>
    <property type="project" value="UniProtKB-EC"/>
</dbReference>
<dbReference type="GO" id="GO:0001968">
    <property type="term" value="F:fibronectin binding"/>
    <property type="evidence" value="ECO:0000314"/>
    <property type="project" value="CAFA"/>
</dbReference>
<dbReference type="GO" id="GO:0050348">
    <property type="term" value="F:trehalose O-mycolyltransferase activity"/>
    <property type="evidence" value="ECO:0007669"/>
    <property type="project" value="UniProtKB-EC"/>
</dbReference>
<dbReference type="GO" id="GO:0035375">
    <property type="term" value="F:zymogen binding"/>
    <property type="evidence" value="ECO:0000353"/>
    <property type="project" value="CAFA"/>
</dbReference>
<dbReference type="GO" id="GO:0010756">
    <property type="term" value="P:positive regulation of plasminogen activation"/>
    <property type="evidence" value="ECO:0000314"/>
    <property type="project" value="CAFA"/>
</dbReference>
<dbReference type="GO" id="GO:0040009">
    <property type="term" value="P:regulation of growth rate"/>
    <property type="evidence" value="ECO:0000315"/>
    <property type="project" value="UniProtKB"/>
</dbReference>
<dbReference type="GO" id="GO:0046677">
    <property type="term" value="P:response to antibiotic"/>
    <property type="evidence" value="ECO:0000314"/>
    <property type="project" value="MTBBASE"/>
</dbReference>
<dbReference type="GO" id="GO:0052572">
    <property type="term" value="P:response to host immune response"/>
    <property type="evidence" value="ECO:0000270"/>
    <property type="project" value="MTBBASE"/>
</dbReference>
<dbReference type="FunFam" id="3.40.50.1820:FF:000086">
    <property type="entry name" value="Diacylglycerol acyltransferase/mycolyltransferase Ag85C"/>
    <property type="match status" value="1"/>
</dbReference>
<dbReference type="Gene3D" id="3.40.50.1820">
    <property type="entry name" value="alpha/beta hydrolase"/>
    <property type="match status" value="1"/>
</dbReference>
<dbReference type="InterPro" id="IPR029058">
    <property type="entry name" value="AB_hydrolase_fold"/>
</dbReference>
<dbReference type="InterPro" id="IPR000801">
    <property type="entry name" value="Esterase-like"/>
</dbReference>
<dbReference type="InterPro" id="IPR050583">
    <property type="entry name" value="Mycobacterial_A85_antigen"/>
</dbReference>
<dbReference type="PANTHER" id="PTHR48098:SF1">
    <property type="entry name" value="DIACYLGLYCEROL ACYLTRANSFERASE_MYCOLYLTRANSFERASE AG85A"/>
    <property type="match status" value="1"/>
</dbReference>
<dbReference type="PANTHER" id="PTHR48098">
    <property type="entry name" value="ENTEROCHELIN ESTERASE-RELATED"/>
    <property type="match status" value="1"/>
</dbReference>
<dbReference type="Pfam" id="PF00756">
    <property type="entry name" value="Esterase"/>
    <property type="match status" value="1"/>
</dbReference>
<dbReference type="SUPFAM" id="SSF53474">
    <property type="entry name" value="alpha/beta-Hydrolases"/>
    <property type="match status" value="1"/>
</dbReference>
<keyword id="KW-0002">3D-structure</keyword>
<keyword id="KW-0012">Acyltransferase</keyword>
<keyword id="KW-0903">Direct protein sequencing</keyword>
<keyword id="KW-1015">Disulfide bond</keyword>
<keyword id="KW-1185">Reference proteome</keyword>
<keyword id="KW-0964">Secreted</keyword>
<keyword id="KW-0732">Signal</keyword>
<keyword id="KW-0808">Transferase</keyword>
<comment type="function">
    <text evidence="4 5 6">The antigen 85 proteins (FbpA, FbpB, FbpC) are responsible for the high affinity of mycobacteria for fibronectin, a large adhesive glycoprotein, which facilitates the attachment of M.tuberculosis to murine alveolar macrophages (AMs). They also help to maintain the integrity of the cell wall by catalyzing the transfer of mycolic acids to cell wall arabinogalactan and through the synthesis of alpha,alpha-trehalose dimycolate (TDM, cord factor). They catalyze the transfer of a mycoloyl residue from one molecule of alpha,alpha-trehalose monomycolate (TMM) to another TMM, leading to the formation of TDM.</text>
</comment>
<comment type="catalytic activity">
    <reaction>
        <text>2 alpha,alpha'-trehalose 6-mycolate = alpha,alpha'-trehalose 6,6'-bismycolate + alpha,alpha-trehalose</text>
        <dbReference type="Rhea" id="RHEA:23472"/>
        <dbReference type="ChEBI" id="CHEBI:16551"/>
        <dbReference type="ChEBI" id="CHEBI:18195"/>
        <dbReference type="ChEBI" id="CHEBI:18234"/>
        <dbReference type="EC" id="2.3.1.122"/>
    </reaction>
</comment>
<comment type="catalytic activity">
    <reaction>
        <text>an acyl-CoA + a 1,2-diacyl-sn-glycerol = a triacyl-sn-glycerol + CoA</text>
        <dbReference type="Rhea" id="RHEA:10868"/>
        <dbReference type="ChEBI" id="CHEBI:17815"/>
        <dbReference type="ChEBI" id="CHEBI:57287"/>
        <dbReference type="ChEBI" id="CHEBI:58342"/>
        <dbReference type="ChEBI" id="CHEBI:64615"/>
        <dbReference type="EC" id="2.3.1.20"/>
    </reaction>
</comment>
<comment type="interaction">
    <interactant intactId="EBI-26878221">
        <id>P9WQP1</id>
    </interactant>
    <interactant intactId="EBI-11784425">
        <id>PRO_0000009136</id>
        <label>FCN1</label>
        <dbReference type="UniProtKB" id="O00602"/>
    </interactant>
    <organismsDiffer>true</organismsDiffer>
    <experiments>3</experiments>
</comment>
<comment type="interaction">
    <interactant intactId="EBI-26878221">
        <id>P9WQP1</id>
    </interactant>
    <interactant intactId="EBI-7468784">
        <id>Q15485</id>
        <label>FCN2</label>
    </interactant>
    <organismsDiffer>true</organismsDiffer>
    <experiments>3</experiments>
</comment>
<comment type="interaction">
    <interactant intactId="EBI-26878221">
        <id>P9WQP1</id>
    </interactant>
    <interactant intactId="EBI-11786958">
        <id>O75636</id>
        <label>FCN3</label>
    </interactant>
    <organismsDiffer>true</organismsDiffer>
    <experiments>4</experiments>
</comment>
<comment type="interaction">
    <interactant intactId="EBI-26878221">
        <id>P9WQP1</id>
    </interactant>
    <interactant intactId="EBI-25427940">
        <id>PRO_0000017401</id>
        <label>MBL2</label>
        <dbReference type="UniProtKB" id="P11226"/>
    </interactant>
    <organismsDiffer>true</organismsDiffer>
    <experiments>2</experiments>
</comment>
<comment type="subcellular location">
    <subcellularLocation>
        <location evidence="1">Secreted</location>
    </subcellularLocation>
</comment>
<comment type="disruption phenotype">
    <text evidence="4">Cells lacking this gene produce normally mycoloylated cell wall components.</text>
</comment>
<comment type="miscellaneous">
    <text>Was identified as a high-confidence drug target.</text>
</comment>
<comment type="similarity">
    <text evidence="7">Belongs to the mycobacterial A85 antigen family.</text>
</comment>
<accession>P9WQP1</accession>
<accession>D6MJP5</accession>
<accession>F2GHQ8</accession>
<accession>P0C5B9</accession>
<accession>P31952</accession>
<accession>Q9RMI0</accession>
<reference key="1">
    <citation type="journal article" date="1994" name="DNA Seq.">
        <title>Nucleotide sequence of the 85B-protein gene of Mycobacterium bovis BCG and Mycobacterium tuberculosis.</title>
        <authorList>
            <person name="de Wit L."/>
            <person name="Palou M."/>
            <person name="Content J."/>
        </authorList>
    </citation>
    <scope>NUCLEOTIDE SEQUENCE [GENOMIC DNA]</scope>
    <source>
        <strain>ATCC 35801 / TMC 107 / Erdman</strain>
    </source>
</reference>
<reference key="2">
    <citation type="journal article" date="1996" name="Infect. Immun.">
        <title>Novel insights into the genetics, biochemistry, and immunocytochemistry of the 30-kilodalton major extracellular protein of Mycobacterium tuberculosis.</title>
        <authorList>
            <person name="Harth G."/>
            <person name="Lee B.Y."/>
            <person name="Wang J."/>
            <person name="Clemens D.L."/>
            <person name="Horwitz M.A."/>
        </authorList>
    </citation>
    <scope>NUCLEOTIDE SEQUENCE [GENOMIC DNA]</scope>
    <source>
        <strain>ATCC 35801 / TMC 107 / Erdman</strain>
    </source>
</reference>
<reference key="3">
    <citation type="journal article" date="2010" name="Infect. Genet. Evol.">
        <title>Single nucleotide polymorphisms in cell wall biosynthesis-associated genes and phylogeny of Mycobacterium tuberculosis lineages.</title>
        <authorList>
            <person name="Chuang P.C."/>
            <person name="Chen Y.M."/>
            <person name="Chen H.Y."/>
            <person name="Jou R."/>
        </authorList>
    </citation>
    <scope>NUCLEOTIDE SEQUENCE [GENOMIC DNA]</scope>
    <source>
        <strain>BJ10</strain>
    </source>
</reference>
<reference key="4">
    <citation type="journal article" date="1998" name="Nature">
        <title>Deciphering the biology of Mycobacterium tuberculosis from the complete genome sequence.</title>
        <authorList>
            <person name="Cole S.T."/>
            <person name="Brosch R."/>
            <person name="Parkhill J."/>
            <person name="Garnier T."/>
            <person name="Churcher C.M."/>
            <person name="Harris D.E."/>
            <person name="Gordon S.V."/>
            <person name="Eiglmeier K."/>
            <person name="Gas S."/>
            <person name="Barry C.E. III"/>
            <person name="Tekaia F."/>
            <person name="Badcock K."/>
            <person name="Basham D."/>
            <person name="Brown D."/>
            <person name="Chillingworth T."/>
            <person name="Connor R."/>
            <person name="Davies R.M."/>
            <person name="Devlin K."/>
            <person name="Feltwell T."/>
            <person name="Gentles S."/>
            <person name="Hamlin N."/>
            <person name="Holroyd S."/>
            <person name="Hornsby T."/>
            <person name="Jagels K."/>
            <person name="Krogh A."/>
            <person name="McLean J."/>
            <person name="Moule S."/>
            <person name="Murphy L.D."/>
            <person name="Oliver S."/>
            <person name="Osborne J."/>
            <person name="Quail M.A."/>
            <person name="Rajandream M.A."/>
            <person name="Rogers J."/>
            <person name="Rutter S."/>
            <person name="Seeger K."/>
            <person name="Skelton S."/>
            <person name="Squares S."/>
            <person name="Squares R."/>
            <person name="Sulston J.E."/>
            <person name="Taylor K."/>
            <person name="Whitehead S."/>
            <person name="Barrell B.G."/>
        </authorList>
    </citation>
    <scope>NUCLEOTIDE SEQUENCE [LARGE SCALE GENOMIC DNA]</scope>
    <source>
        <strain>ATCC 25618 / H37Rv</strain>
    </source>
</reference>
<reference key="5">
    <citation type="journal article" date="1990" name="Infect. Immun.">
        <title>Evidence for three separate genes encoding the proteins of the mycobacterial antigen 85 complex.</title>
        <authorList>
            <person name="Wiker H.G."/>
            <person name="Sletten K."/>
            <person name="Nagai S."/>
            <person name="Harboe M."/>
        </authorList>
    </citation>
    <scope>PROTEIN SEQUENCE OF 41-50</scope>
</reference>
<reference key="6">
    <citation type="journal article" date="1988" name="Infect. Immun.">
        <title>Characterization of fibronectin-binding antigens released by Mycobacterium tuberculosis and Mycobacterium bovis BCG.</title>
        <authorList>
            <person name="Abou-Zeid C."/>
            <person name="Ratliff T.L."/>
            <person name="Wiker H.G."/>
            <person name="Harboe M."/>
            <person name="Bennedsen J."/>
            <person name="Rook G.A."/>
        </authorList>
    </citation>
    <scope>FUNCTION IN THE FIBRONECTIN BINDING</scope>
</reference>
<reference key="7">
    <citation type="journal article" date="1997" name="Science">
        <title>Role of the major antigen of Mycobacterium tuberculosis in cell wall biogenesis.</title>
        <authorList>
            <person name="Belisle J.T."/>
            <person name="Vissa V.D."/>
            <person name="Sievert T."/>
            <person name="Takayama K."/>
            <person name="Brennan P.J."/>
            <person name="Besra G.S."/>
        </authorList>
    </citation>
    <scope>FUNCTION AS A MYCOLYLTRANSFERASE</scope>
    <scope>NOMENCLATURE</scope>
</reference>
<reference key="8">
    <citation type="journal article" date="2002" name="Mol. Microbiol.">
        <title>Evidence for a partial redundancy of the fibronectin-binding proteins for the transfer of mycoloyl residues onto the cell wall arabinogalactan termini of Mycobacterium tuberculosis.</title>
        <authorList>
            <person name="Puech V."/>
            <person name="Guilhot C."/>
            <person name="Perez E."/>
            <person name="Tropis M."/>
            <person name="Armitige L.Y."/>
            <person name="Gicquel B."/>
            <person name="Daffe M."/>
        </authorList>
    </citation>
    <scope>FUNCTION AS A MYCOLYLTRANSFERASE</scope>
    <scope>DISRUPTION PHENOTYPE</scope>
</reference>
<reference key="9">
    <citation type="journal article" date="2008" name="BMC Syst. Biol.">
        <title>targetTB: a target identification pipeline for Mycobacterium tuberculosis through an interactome, reactome and genome-scale structural analysis.</title>
        <authorList>
            <person name="Raman K."/>
            <person name="Yeturu K."/>
            <person name="Chandra N."/>
        </authorList>
    </citation>
    <scope>IDENTIFICATION AS A DRUG TARGET [LARGE SCALE ANALYSIS]</scope>
</reference>
<reference key="10">
    <citation type="journal article" date="2011" name="Mol. Cell. Proteomics">
        <title>Proteogenomic analysis of Mycobacterium tuberculosis by high resolution mass spectrometry.</title>
        <authorList>
            <person name="Kelkar D.S."/>
            <person name="Kumar D."/>
            <person name="Kumar P."/>
            <person name="Balakrishnan L."/>
            <person name="Muthusamy B."/>
            <person name="Yadav A.K."/>
            <person name="Shrivastava P."/>
            <person name="Marimuthu A."/>
            <person name="Anand S."/>
            <person name="Sundaram H."/>
            <person name="Kingsbury R."/>
            <person name="Harsha H.C."/>
            <person name="Nair B."/>
            <person name="Prasad T.S."/>
            <person name="Chauhan D.S."/>
            <person name="Katoch K."/>
            <person name="Katoch V.M."/>
            <person name="Kumar P."/>
            <person name="Chaerkady R."/>
            <person name="Ramachandran S."/>
            <person name="Dash D."/>
            <person name="Pandey A."/>
        </authorList>
    </citation>
    <scope>IDENTIFICATION BY MASS SPECTROMETRY [LARGE SCALE ANALYSIS]</scope>
    <source>
        <strain>ATCC 25618 / H37Rv</strain>
    </source>
</reference>
<reference key="11">
    <citation type="journal article" date="2001" name="J. Mol. Biol.">
        <title>An interfacial mechanism and a class of inhibitors inferred from two crystal structures of the Mycobacterium tuberculosis 30 kDa major secretory protein (Antigen 85B), a mycolyl transferase.</title>
        <authorList>
            <person name="Anderson D.H."/>
            <person name="Harth G."/>
            <person name="Horwitz M.A."/>
            <person name="Eisenberg D."/>
        </authorList>
    </citation>
    <scope>X-RAY CRYSTALLOGRAPHY (1.8 ANGSTROMS) OF 41-325 IN COMPLEX WITH SUBSTRATE</scope>
    <scope>ACTIVE SITE</scope>
    <scope>REACTION MECHANISM</scope>
    <scope>DISULFIDE BOND</scope>
</reference>
<evidence type="ECO:0000250" key="1"/>
<evidence type="ECO:0000255" key="2"/>
<evidence type="ECO:0000269" key="3">
    <source>
    </source>
</evidence>
<evidence type="ECO:0000269" key="4">
    <source>
    </source>
</evidence>
<evidence type="ECO:0000269" key="5">
    <source>
    </source>
</evidence>
<evidence type="ECO:0000269" key="6">
    <source>
    </source>
</evidence>
<evidence type="ECO:0000305" key="7"/>
<evidence type="ECO:0000305" key="8">
    <source>
    </source>
</evidence>
<evidence type="ECO:0007829" key="9">
    <source>
        <dbReference type="PDB" id="1F0N"/>
    </source>
</evidence>
<name>A85B_MYCTU</name>
<protein>
    <recommendedName>
        <fullName>Diacylglycerol acyltransferase/mycolyltransferase Ag85B</fullName>
        <shortName>DGAT</shortName>
        <ecNumber>2.3.1.122</ecNumber>
        <ecNumber>2.3.1.20</ecNumber>
    </recommendedName>
    <alternativeName>
        <fullName>30 kDa extracellular protein</fullName>
    </alternativeName>
    <alternativeName>
        <fullName>Acyl-CoA:diacylglycerol acyltransferase</fullName>
    </alternativeName>
    <alternativeName>
        <fullName>Antigen 85 complex B</fullName>
        <shortName>85B</shortName>
        <shortName>Ag85B</shortName>
    </alternativeName>
    <alternativeName>
        <fullName>Extracellular alpha-antigen</fullName>
    </alternativeName>
    <alternativeName>
        <fullName>Fibronectin-binding protein B</fullName>
        <shortName>Fbps B</shortName>
    </alternativeName>
</protein>
<sequence>MTDVSRKIRAWGRRLMIGTAAAVVLPGLVGLAGGAATAGAFSRPGLPVEYLQVPSPSMGRDIKVQFQSGGNNSPAVYLLDGLRAQDDYNGWDINTPAFEWYYQSGLSIVMPVGGQSSFYSDWYSPACGKAGCQTYKWETFLTSELPQWLSANRAVKPTGSAAIGLSMAGSSAMILAAYHPQQFIYAGSLSALLDPSQGMGPSLIGLAMGDAGGYKAADMWGPSSDPAWERNDPTQQIPKLVANNTRLWVYCGNGTPNELGGANIPAEFLENFVRSSNLKFQDAYNAAGGHNAVFNFPPNGTHSWEYWGAQLNAMKGDLQSSLGAG</sequence>
<organism>
    <name type="scientific">Mycobacterium tuberculosis (strain ATCC 25618 / H37Rv)</name>
    <dbReference type="NCBI Taxonomy" id="83332"/>
    <lineage>
        <taxon>Bacteria</taxon>
        <taxon>Bacillati</taxon>
        <taxon>Actinomycetota</taxon>
        <taxon>Actinomycetes</taxon>
        <taxon>Mycobacteriales</taxon>
        <taxon>Mycobacteriaceae</taxon>
        <taxon>Mycobacterium</taxon>
        <taxon>Mycobacterium tuberculosis complex</taxon>
    </lineage>
</organism>